<comment type="function">
    <text evidence="1">Involved in cell division and chromosome segregation.</text>
</comment>
<comment type="similarity">
    <text evidence="1">Belongs to the WhiA family.</text>
</comment>
<sequence>MAMTAAVKDEISRLPVTRTCCRKAEVSAILRFAGGLHLVSGRIVIEAELDTAMAARRLKRDILEIFGHSSELIVMAPGGLRRGSRYVVRVVAGGDQLARQTGLVDGRGRPIRGLPPQVVSGATCDAEAAWRGAFLAHGSLTEPGRSSSLEVTCPGPEAALALVGAARRLSIAAKAREVRGVDRVVVRDGDAIGALLTRLGAHESVLAWEERRMRREVRATANRLANFDDANLRRSARAAVAAGARVQRALEILADEVPEHLAAAGRLRMEHKQASLEELGALADPPLTKDAVAGRIRRLLAMADKRAQDLGIPGTESNLTEEMADNLAG</sequence>
<accession>Q829W5</accession>
<name>WHIA_STRAW</name>
<proteinExistence type="inferred from homology"/>
<organism>
    <name type="scientific">Streptomyces avermitilis (strain ATCC 31267 / DSM 46492 / JCM 5070 / NBRC 14893 / NCIMB 12804 / NRRL 8165 / MA-4680)</name>
    <dbReference type="NCBI Taxonomy" id="227882"/>
    <lineage>
        <taxon>Bacteria</taxon>
        <taxon>Bacillati</taxon>
        <taxon>Actinomycetota</taxon>
        <taxon>Actinomycetes</taxon>
        <taxon>Kitasatosporales</taxon>
        <taxon>Streptomycetaceae</taxon>
        <taxon>Streptomyces</taxon>
    </lineage>
</organism>
<evidence type="ECO:0000255" key="1">
    <source>
        <dbReference type="HAMAP-Rule" id="MF_01420"/>
    </source>
</evidence>
<reference key="1">
    <citation type="journal article" date="2003" name="Nat. Biotechnol.">
        <title>Complete genome sequence and comparative analysis of the industrial microorganism Streptomyces avermitilis.</title>
        <authorList>
            <person name="Ikeda H."/>
            <person name="Ishikawa J."/>
            <person name="Hanamoto A."/>
            <person name="Shinose M."/>
            <person name="Kikuchi H."/>
            <person name="Shiba T."/>
            <person name="Sakaki Y."/>
            <person name="Hattori M."/>
            <person name="Omura S."/>
        </authorList>
    </citation>
    <scope>NUCLEOTIDE SEQUENCE [LARGE SCALE GENOMIC DNA]</scope>
    <source>
        <strain>ATCC 31267 / DSM 46492 / JCM 5070 / NBRC 14893 / NCIMB 12804 / NRRL 8165 / MA-4680</strain>
    </source>
</reference>
<reference key="2">
    <citation type="journal article" date="2001" name="Proc. Natl. Acad. Sci. U.S.A.">
        <title>Genome sequence of an industrial microorganism Streptomyces avermitilis: deducing the ability of producing secondary metabolites.</title>
        <authorList>
            <person name="Omura S."/>
            <person name="Ikeda H."/>
            <person name="Ishikawa J."/>
            <person name="Hanamoto A."/>
            <person name="Takahashi C."/>
            <person name="Shinose M."/>
            <person name="Takahashi Y."/>
            <person name="Horikawa H."/>
            <person name="Nakazawa H."/>
            <person name="Osonoe T."/>
            <person name="Kikuchi H."/>
            <person name="Shiba T."/>
            <person name="Sakaki Y."/>
            <person name="Hattori M."/>
        </authorList>
    </citation>
    <scope>NUCLEOTIDE SEQUENCE [LARGE SCALE GENOMIC DNA]</scope>
    <source>
        <strain>ATCC 31267 / DSM 46492 / JCM 5070 / NBRC 14893 / NCIMB 12804 / NRRL 8165 / MA-4680</strain>
    </source>
</reference>
<gene>
    <name evidence="1" type="primary">whiA</name>
    <name type="ordered locus">SAV_6294</name>
</gene>
<keyword id="KW-0131">Cell cycle</keyword>
<keyword id="KW-0132">Cell division</keyword>
<keyword id="KW-0238">DNA-binding</keyword>
<keyword id="KW-1185">Reference proteome</keyword>
<protein>
    <recommendedName>
        <fullName evidence="1">Probable cell division protein WhiA</fullName>
    </recommendedName>
</protein>
<dbReference type="EMBL" id="BA000030">
    <property type="protein sequence ID" value="BAC74005.1"/>
    <property type="molecule type" value="Genomic_DNA"/>
</dbReference>
<dbReference type="RefSeq" id="WP_010987695.1">
    <property type="nucleotide sequence ID" value="NC_003155.5"/>
</dbReference>
<dbReference type="SMR" id="Q829W5"/>
<dbReference type="GeneID" id="41543369"/>
<dbReference type="GeneID" id="93997129"/>
<dbReference type="KEGG" id="sma:SAVERM_6294"/>
<dbReference type="eggNOG" id="COG1481">
    <property type="taxonomic scope" value="Bacteria"/>
</dbReference>
<dbReference type="HOGENOM" id="CLU_053282_0_0_11"/>
<dbReference type="OrthoDB" id="5197218at2"/>
<dbReference type="Proteomes" id="UP000000428">
    <property type="component" value="Chromosome"/>
</dbReference>
<dbReference type="GO" id="GO:0003677">
    <property type="term" value="F:DNA binding"/>
    <property type="evidence" value="ECO:0007669"/>
    <property type="project" value="UniProtKB-UniRule"/>
</dbReference>
<dbReference type="GO" id="GO:0051301">
    <property type="term" value="P:cell division"/>
    <property type="evidence" value="ECO:0007669"/>
    <property type="project" value="UniProtKB-UniRule"/>
</dbReference>
<dbReference type="GO" id="GO:0043937">
    <property type="term" value="P:regulation of sporulation"/>
    <property type="evidence" value="ECO:0007669"/>
    <property type="project" value="InterPro"/>
</dbReference>
<dbReference type="FunFam" id="3.10.28.10:FF:000001">
    <property type="entry name" value="Probable cell division protein WhiA"/>
    <property type="match status" value="1"/>
</dbReference>
<dbReference type="Gene3D" id="3.10.28.10">
    <property type="entry name" value="Homing endonucleases"/>
    <property type="match status" value="1"/>
</dbReference>
<dbReference type="HAMAP" id="MF_01420">
    <property type="entry name" value="HTH_type_WhiA"/>
    <property type="match status" value="1"/>
</dbReference>
<dbReference type="InterPro" id="IPR027434">
    <property type="entry name" value="Homing_endonucl"/>
</dbReference>
<dbReference type="InterPro" id="IPR018478">
    <property type="entry name" value="Sporu_reg_WhiA_N_dom"/>
</dbReference>
<dbReference type="InterPro" id="IPR003802">
    <property type="entry name" value="Sporulation_regulator_WhiA"/>
</dbReference>
<dbReference type="InterPro" id="IPR023054">
    <property type="entry name" value="Sporulation_regulator_WhiA_C"/>
</dbReference>
<dbReference type="InterPro" id="IPR039518">
    <property type="entry name" value="WhiA_LAGLIDADG_dom"/>
</dbReference>
<dbReference type="NCBIfam" id="TIGR00647">
    <property type="entry name" value="DNA_bind_WhiA"/>
    <property type="match status" value="1"/>
</dbReference>
<dbReference type="PANTHER" id="PTHR37307">
    <property type="entry name" value="CELL DIVISION PROTEIN WHIA-RELATED"/>
    <property type="match status" value="1"/>
</dbReference>
<dbReference type="PANTHER" id="PTHR37307:SF1">
    <property type="entry name" value="CELL DIVISION PROTEIN WHIA-RELATED"/>
    <property type="match status" value="1"/>
</dbReference>
<dbReference type="Pfam" id="PF02650">
    <property type="entry name" value="HTH_WhiA"/>
    <property type="match status" value="1"/>
</dbReference>
<dbReference type="Pfam" id="PF14527">
    <property type="entry name" value="LAGLIDADG_WhiA"/>
    <property type="match status" value="1"/>
</dbReference>
<dbReference type="Pfam" id="PF10298">
    <property type="entry name" value="WhiA_N"/>
    <property type="match status" value="1"/>
</dbReference>
<feature type="chain" id="PRO_0000376599" description="Probable cell division protein WhiA">
    <location>
        <begin position="1"/>
        <end position="329"/>
    </location>
</feature>
<feature type="DNA-binding region" description="H-T-H motif" evidence="1">
    <location>
        <begin position="275"/>
        <end position="308"/>
    </location>
</feature>